<keyword id="KW-0963">Cytoplasm</keyword>
<keyword id="KW-0489">Methyltransferase</keyword>
<keyword id="KW-1185">Reference proteome</keyword>
<keyword id="KW-0698">rRNA processing</keyword>
<keyword id="KW-0949">S-adenosyl-L-methionine</keyword>
<keyword id="KW-0808">Transferase</keyword>
<reference key="1">
    <citation type="submission" date="2006-05" db="EMBL/GenBank/DDBJ databases">
        <authorList>
            <consortium name="Genoscope"/>
        </authorList>
    </citation>
    <scope>NUCLEOTIDE SEQUENCE [LARGE SCALE GENOMIC DNA]</scope>
    <source>
        <strain>RCC307</strain>
    </source>
</reference>
<comment type="function">
    <text evidence="1">Specifically methylates the N4 position of cytidine in position 1402 (C1402) of 16S rRNA.</text>
</comment>
<comment type="catalytic activity">
    <reaction evidence="1">
        <text>cytidine(1402) in 16S rRNA + S-adenosyl-L-methionine = N(4)-methylcytidine(1402) in 16S rRNA + S-adenosyl-L-homocysteine + H(+)</text>
        <dbReference type="Rhea" id="RHEA:42928"/>
        <dbReference type="Rhea" id="RHEA-COMP:10286"/>
        <dbReference type="Rhea" id="RHEA-COMP:10287"/>
        <dbReference type="ChEBI" id="CHEBI:15378"/>
        <dbReference type="ChEBI" id="CHEBI:57856"/>
        <dbReference type="ChEBI" id="CHEBI:59789"/>
        <dbReference type="ChEBI" id="CHEBI:74506"/>
        <dbReference type="ChEBI" id="CHEBI:82748"/>
        <dbReference type="EC" id="2.1.1.199"/>
    </reaction>
</comment>
<comment type="subcellular location">
    <subcellularLocation>
        <location evidence="1">Cytoplasm</location>
    </subcellularLocation>
</comment>
<comment type="similarity">
    <text evidence="1">Belongs to the methyltransferase superfamily. RsmH family.</text>
</comment>
<name>RSMH_SYNR3</name>
<gene>
    <name evidence="1" type="primary">rsmH</name>
    <name type="synonym">mraW</name>
    <name type="ordered locus">SynRCC307_2258</name>
</gene>
<organism>
    <name type="scientific">Synechococcus sp. (strain RCC307)</name>
    <dbReference type="NCBI Taxonomy" id="316278"/>
    <lineage>
        <taxon>Bacteria</taxon>
        <taxon>Bacillati</taxon>
        <taxon>Cyanobacteriota</taxon>
        <taxon>Cyanophyceae</taxon>
        <taxon>Synechococcales</taxon>
        <taxon>Synechococcaceae</taxon>
        <taxon>Synechococcus</taxon>
    </lineage>
</organism>
<protein>
    <recommendedName>
        <fullName evidence="1">Ribosomal RNA small subunit methyltransferase H</fullName>
        <ecNumber evidence="1">2.1.1.199</ecNumber>
    </recommendedName>
    <alternativeName>
        <fullName evidence="1">16S rRNA m(4)C1402 methyltransferase</fullName>
    </alternativeName>
    <alternativeName>
        <fullName evidence="1">rRNA (cytosine-N(4)-)-methyltransferase RsmH</fullName>
    </alternativeName>
</protein>
<evidence type="ECO:0000255" key="1">
    <source>
        <dbReference type="HAMAP-Rule" id="MF_01007"/>
    </source>
</evidence>
<sequence length="299" mass="32718">MSSSFHHQPVLPQQVLEALAELPDEGVLLDATVGGGGHSSLLLDVHPGWQLIGLDQDPAARAAAAQQLERFGERVQLVASNFAAYTPDQPVVAVLADLGVSSHQLDVPERGFSFRADGPLDMRMNTEGDGETAAALIDRLEENALADLLFHYGEERLSRRIARRLKTEGPWDDGERGTAALAYAIAGCYPPKQRHGRIHAATRSFQALRIAVNDELGVLETLLNDAPNWLEPGGRIAVISFHSLEDRLVKNRFKADERLRVISRKPLIASEQEAEANPRARSAKLRVAERLSAELEPAQ</sequence>
<dbReference type="EC" id="2.1.1.199" evidence="1"/>
<dbReference type="EMBL" id="CT978603">
    <property type="protein sequence ID" value="CAK29161.1"/>
    <property type="molecule type" value="Genomic_DNA"/>
</dbReference>
<dbReference type="SMR" id="A5GWA2"/>
<dbReference type="STRING" id="316278.SynRCC307_2258"/>
<dbReference type="KEGG" id="syr:SynRCC307_2258"/>
<dbReference type="eggNOG" id="COG0275">
    <property type="taxonomic scope" value="Bacteria"/>
</dbReference>
<dbReference type="HOGENOM" id="CLU_038422_3_0_3"/>
<dbReference type="OrthoDB" id="9806637at2"/>
<dbReference type="Proteomes" id="UP000001115">
    <property type="component" value="Chromosome"/>
</dbReference>
<dbReference type="GO" id="GO:0005737">
    <property type="term" value="C:cytoplasm"/>
    <property type="evidence" value="ECO:0007669"/>
    <property type="project" value="UniProtKB-SubCell"/>
</dbReference>
<dbReference type="GO" id="GO:0071424">
    <property type="term" value="F:rRNA (cytosine-N4-)-methyltransferase activity"/>
    <property type="evidence" value="ECO:0007669"/>
    <property type="project" value="UniProtKB-UniRule"/>
</dbReference>
<dbReference type="GO" id="GO:0070475">
    <property type="term" value="P:rRNA base methylation"/>
    <property type="evidence" value="ECO:0007669"/>
    <property type="project" value="UniProtKB-UniRule"/>
</dbReference>
<dbReference type="Gene3D" id="1.10.150.170">
    <property type="entry name" value="Putative methyltransferase TM0872, insert domain"/>
    <property type="match status" value="1"/>
</dbReference>
<dbReference type="Gene3D" id="3.40.50.150">
    <property type="entry name" value="Vaccinia Virus protein VP39"/>
    <property type="match status" value="1"/>
</dbReference>
<dbReference type="HAMAP" id="MF_01007">
    <property type="entry name" value="16SrRNA_methyltr_H"/>
    <property type="match status" value="1"/>
</dbReference>
<dbReference type="InterPro" id="IPR002903">
    <property type="entry name" value="RsmH"/>
</dbReference>
<dbReference type="InterPro" id="IPR023397">
    <property type="entry name" value="SAM-dep_MeTrfase_MraW_recog"/>
</dbReference>
<dbReference type="InterPro" id="IPR029063">
    <property type="entry name" value="SAM-dependent_MTases_sf"/>
</dbReference>
<dbReference type="NCBIfam" id="TIGR00006">
    <property type="entry name" value="16S rRNA (cytosine(1402)-N(4))-methyltransferase RsmH"/>
    <property type="match status" value="1"/>
</dbReference>
<dbReference type="PANTHER" id="PTHR11265:SF0">
    <property type="entry name" value="12S RRNA N4-METHYLCYTIDINE METHYLTRANSFERASE"/>
    <property type="match status" value="1"/>
</dbReference>
<dbReference type="PANTHER" id="PTHR11265">
    <property type="entry name" value="S-ADENOSYL-METHYLTRANSFERASE MRAW"/>
    <property type="match status" value="1"/>
</dbReference>
<dbReference type="Pfam" id="PF01795">
    <property type="entry name" value="Methyltransf_5"/>
    <property type="match status" value="1"/>
</dbReference>
<dbReference type="PIRSF" id="PIRSF004486">
    <property type="entry name" value="MraW"/>
    <property type="match status" value="1"/>
</dbReference>
<dbReference type="SUPFAM" id="SSF81799">
    <property type="entry name" value="Putative methyltransferase TM0872, insert domain"/>
    <property type="match status" value="1"/>
</dbReference>
<dbReference type="SUPFAM" id="SSF53335">
    <property type="entry name" value="S-adenosyl-L-methionine-dependent methyltransferases"/>
    <property type="match status" value="1"/>
</dbReference>
<feature type="chain" id="PRO_0000387183" description="Ribosomal RNA small subunit methyltransferase H">
    <location>
        <begin position="1"/>
        <end position="299"/>
    </location>
</feature>
<feature type="binding site" evidence="1">
    <location>
        <begin position="36"/>
        <end position="38"/>
    </location>
    <ligand>
        <name>S-adenosyl-L-methionine</name>
        <dbReference type="ChEBI" id="CHEBI:59789"/>
    </ligand>
</feature>
<feature type="binding site" evidence="1">
    <location>
        <position position="55"/>
    </location>
    <ligand>
        <name>S-adenosyl-L-methionine</name>
        <dbReference type="ChEBI" id="CHEBI:59789"/>
    </ligand>
</feature>
<feature type="binding site" evidence="1">
    <location>
        <position position="82"/>
    </location>
    <ligand>
        <name>S-adenosyl-L-methionine</name>
        <dbReference type="ChEBI" id="CHEBI:59789"/>
    </ligand>
</feature>
<feature type="binding site" evidence="1">
    <location>
        <position position="97"/>
    </location>
    <ligand>
        <name>S-adenosyl-L-methionine</name>
        <dbReference type="ChEBI" id="CHEBI:59789"/>
    </ligand>
</feature>
<feature type="binding site" evidence="1">
    <location>
        <position position="104"/>
    </location>
    <ligand>
        <name>S-adenosyl-L-methionine</name>
        <dbReference type="ChEBI" id="CHEBI:59789"/>
    </ligand>
</feature>
<proteinExistence type="inferred from homology"/>
<accession>A5GWA2</accession>